<evidence type="ECO:0000250" key="1">
    <source>
        <dbReference type="UniProtKB" id="Q8VDK1"/>
    </source>
</evidence>
<evidence type="ECO:0000255" key="2"/>
<evidence type="ECO:0000255" key="3">
    <source>
        <dbReference type="PROSITE-ProRule" id="PRU00054"/>
    </source>
</evidence>
<evidence type="ECO:0000305" key="4"/>
<sequence length="328" mass="36240">MLGFIIRPPHQLLSLLSCPGLRIPRFSVLCAPPRLRTMAASSSFSELPLVAVCQVTSTPDKEQNFKTCAELIREAARLGACLAFLPEAFDFIARDPEETRRLSEPLSGNLLEEYTQLARECGLWLSLGGFHERGQDWEQTQKIYNCHVIMNNMGSVVATYRKTHLCDVEIPGQGPMRESNSTIPGPSLESPISTPAGKIGLAICYDMRFPELSLALVQAGAEILTYPSAFGSVTGPAHWEVLLRARAIETQCYVVAAAQCGRHHEKRASYGHSMVVDPWGTVVARCSEGPGLCLARIDLNYLQQLRKQLPVFQHRRPDLYGNLGHPLS</sequence>
<reference key="1">
    <citation type="submission" date="2005-11" db="EMBL/GenBank/DDBJ databases">
        <authorList>
            <consortium name="NIH - Mammalian Gene Collection (MGC) project"/>
        </authorList>
    </citation>
    <scope>NUCLEOTIDE SEQUENCE [LARGE SCALE MRNA]</scope>
    <source>
        <strain>Crossbred X Angus</strain>
        <tissue>Liver</tissue>
    </source>
</reference>
<dbReference type="EC" id="3.5.1.128" evidence="1"/>
<dbReference type="EMBL" id="BC109575">
    <property type="protein sequence ID" value="AAI09576.1"/>
    <property type="molecule type" value="mRNA"/>
</dbReference>
<dbReference type="RefSeq" id="NP_001033112.1">
    <property type="nucleotide sequence ID" value="NM_001038023.2"/>
</dbReference>
<dbReference type="SMR" id="Q32LH4"/>
<dbReference type="FunCoup" id="Q32LH4">
    <property type="interactions" value="1553"/>
</dbReference>
<dbReference type="STRING" id="9913.ENSBTAP00000072097"/>
<dbReference type="PaxDb" id="9913-ENSBTAP00000026843"/>
<dbReference type="GeneID" id="504199"/>
<dbReference type="KEGG" id="bta:504199"/>
<dbReference type="CTD" id="4817"/>
<dbReference type="eggNOG" id="KOG0807">
    <property type="taxonomic scope" value="Eukaryota"/>
</dbReference>
<dbReference type="InParanoid" id="Q32LH4"/>
<dbReference type="OrthoDB" id="680339at2759"/>
<dbReference type="Proteomes" id="UP000009136">
    <property type="component" value="Unplaced"/>
</dbReference>
<dbReference type="GO" id="GO:0005739">
    <property type="term" value="C:mitochondrion"/>
    <property type="evidence" value="ECO:0007669"/>
    <property type="project" value="UniProtKB-SubCell"/>
</dbReference>
<dbReference type="GO" id="GO:0110050">
    <property type="term" value="F:deaminated glutathione amidase activity"/>
    <property type="evidence" value="ECO:0007669"/>
    <property type="project" value="UniProtKB-EC"/>
</dbReference>
<dbReference type="CDD" id="cd07572">
    <property type="entry name" value="nit"/>
    <property type="match status" value="1"/>
</dbReference>
<dbReference type="FunFam" id="3.60.110.10:FF:000005">
    <property type="entry name" value="nitrilase homolog 1 isoform X1"/>
    <property type="match status" value="1"/>
</dbReference>
<dbReference type="Gene3D" id="3.60.110.10">
    <property type="entry name" value="Carbon-nitrogen hydrolase"/>
    <property type="match status" value="1"/>
</dbReference>
<dbReference type="InterPro" id="IPR003010">
    <property type="entry name" value="C-N_Hydrolase"/>
</dbReference>
<dbReference type="InterPro" id="IPR036526">
    <property type="entry name" value="C-N_Hydrolase_sf"/>
</dbReference>
<dbReference type="InterPro" id="IPR045254">
    <property type="entry name" value="Nit1/2_C-N_Hydrolase"/>
</dbReference>
<dbReference type="InterPro" id="IPR001110">
    <property type="entry name" value="UPF0012_CS"/>
</dbReference>
<dbReference type="PANTHER" id="PTHR23088:SF27">
    <property type="entry name" value="DEAMINATED GLUTATHIONE AMIDASE"/>
    <property type="match status" value="1"/>
</dbReference>
<dbReference type="PANTHER" id="PTHR23088">
    <property type="entry name" value="NITRILASE-RELATED"/>
    <property type="match status" value="1"/>
</dbReference>
<dbReference type="Pfam" id="PF00795">
    <property type="entry name" value="CN_hydrolase"/>
    <property type="match status" value="1"/>
</dbReference>
<dbReference type="SUPFAM" id="SSF56317">
    <property type="entry name" value="Carbon-nitrogen hydrolase"/>
    <property type="match status" value="1"/>
</dbReference>
<dbReference type="PROSITE" id="PS50263">
    <property type="entry name" value="CN_HYDROLASE"/>
    <property type="match status" value="1"/>
</dbReference>
<dbReference type="PROSITE" id="PS01227">
    <property type="entry name" value="UPF0012"/>
    <property type="match status" value="1"/>
</dbReference>
<proteinExistence type="evidence at transcript level"/>
<keyword id="KW-0963">Cytoplasm</keyword>
<keyword id="KW-0378">Hydrolase</keyword>
<keyword id="KW-0496">Mitochondrion</keyword>
<keyword id="KW-1185">Reference proteome</keyword>
<keyword id="KW-0809">Transit peptide</keyword>
<protein>
    <recommendedName>
        <fullName>Deaminated glutathione amidase</fullName>
        <shortName>dGSH amidase</shortName>
        <ecNumber evidence="1">3.5.1.128</ecNumber>
    </recommendedName>
    <alternativeName>
        <fullName>Nitrilase homolog 1</fullName>
    </alternativeName>
</protein>
<organism>
    <name type="scientific">Bos taurus</name>
    <name type="common">Bovine</name>
    <dbReference type="NCBI Taxonomy" id="9913"/>
    <lineage>
        <taxon>Eukaryota</taxon>
        <taxon>Metazoa</taxon>
        <taxon>Chordata</taxon>
        <taxon>Craniata</taxon>
        <taxon>Vertebrata</taxon>
        <taxon>Euteleostomi</taxon>
        <taxon>Mammalia</taxon>
        <taxon>Eutheria</taxon>
        <taxon>Laurasiatheria</taxon>
        <taxon>Artiodactyla</taxon>
        <taxon>Ruminantia</taxon>
        <taxon>Pecora</taxon>
        <taxon>Bovidae</taxon>
        <taxon>Bovinae</taxon>
        <taxon>Bos</taxon>
    </lineage>
</organism>
<feature type="transit peptide" description="Mitochondrion" evidence="2">
    <location>
        <begin position="1"/>
        <end position="37"/>
    </location>
</feature>
<feature type="chain" id="PRO_0000290343" description="Deaminated glutathione amidase">
    <location>
        <begin position="38"/>
        <end position="328"/>
    </location>
</feature>
<feature type="domain" description="CN hydrolase" evidence="3">
    <location>
        <begin position="47"/>
        <end position="299"/>
    </location>
</feature>
<feature type="active site" description="Proton acceptor" evidence="3">
    <location>
        <position position="87"/>
    </location>
</feature>
<feature type="active site" description="Proton donor" evidence="3">
    <location>
        <position position="162"/>
    </location>
</feature>
<feature type="active site" description="Nucleophile" evidence="3">
    <location>
        <position position="204"/>
    </location>
</feature>
<comment type="function">
    <text evidence="1">Catalyzes the hydrolysis of the amide bond in N-(4-oxoglutarate)-L-cysteinylglycine (deaminated glutathione), a metabolite repair reaction to dispose of the harmful deaminated glutathione. Plays a role in cell growth and apoptosis. Has tumor suppressor properties that enhances the apoptotic responsiveness in cancer cells. It is also a negative regulator of primary T-cells.</text>
</comment>
<comment type="catalytic activity">
    <reaction evidence="1">
        <text>N-(4-oxoglutaryl)-L-cysteinylglycine + H2O = L-cysteinylglycine + 2-oxoglutarate</text>
        <dbReference type="Rhea" id="RHEA:54532"/>
        <dbReference type="ChEBI" id="CHEBI:15377"/>
        <dbReference type="ChEBI" id="CHEBI:16810"/>
        <dbReference type="ChEBI" id="CHEBI:61694"/>
        <dbReference type="ChEBI" id="CHEBI:138256"/>
        <dbReference type="EC" id="3.5.1.128"/>
    </reaction>
</comment>
<comment type="subcellular location">
    <subcellularLocation>
        <location evidence="1">Cytoplasm</location>
    </subcellularLocation>
    <subcellularLocation>
        <location evidence="1">Mitochondrion</location>
    </subcellularLocation>
</comment>
<comment type="similarity">
    <text evidence="4">Belongs to the carbon-nitrogen hydrolase superfamily. NIT1/NIT2 family.</text>
</comment>
<gene>
    <name type="primary">NIT1</name>
</gene>
<name>NIT1_BOVIN</name>
<accession>Q32LH4</accession>